<dbReference type="EMBL" id="AP007281">
    <property type="protein sequence ID" value="BAG25176.1"/>
    <property type="molecule type" value="Genomic_DNA"/>
</dbReference>
<dbReference type="RefSeq" id="WP_003668195.1">
    <property type="nucleotide sequence ID" value="NC_010609.1"/>
</dbReference>
<dbReference type="SMR" id="B2G6U4"/>
<dbReference type="KEGG" id="lrf:LAR_0660"/>
<dbReference type="HOGENOM" id="CLU_073981_2_0_9"/>
<dbReference type="GO" id="GO:0005737">
    <property type="term" value="C:cytoplasm"/>
    <property type="evidence" value="ECO:0007669"/>
    <property type="project" value="UniProtKB-SubCell"/>
</dbReference>
<dbReference type="GO" id="GO:0043023">
    <property type="term" value="F:ribosomal large subunit binding"/>
    <property type="evidence" value="ECO:0007669"/>
    <property type="project" value="TreeGrafter"/>
</dbReference>
<dbReference type="GO" id="GO:0006415">
    <property type="term" value="P:translational termination"/>
    <property type="evidence" value="ECO:0007669"/>
    <property type="project" value="UniProtKB-UniRule"/>
</dbReference>
<dbReference type="CDD" id="cd00520">
    <property type="entry name" value="RRF"/>
    <property type="match status" value="1"/>
</dbReference>
<dbReference type="FunFam" id="1.10.132.20:FF:000001">
    <property type="entry name" value="Ribosome-recycling factor"/>
    <property type="match status" value="1"/>
</dbReference>
<dbReference type="FunFam" id="3.30.1360.40:FF:000001">
    <property type="entry name" value="Ribosome-recycling factor"/>
    <property type="match status" value="1"/>
</dbReference>
<dbReference type="Gene3D" id="3.30.1360.40">
    <property type="match status" value="1"/>
</dbReference>
<dbReference type="Gene3D" id="1.10.132.20">
    <property type="entry name" value="Ribosome-recycling factor"/>
    <property type="match status" value="1"/>
</dbReference>
<dbReference type="HAMAP" id="MF_00040">
    <property type="entry name" value="RRF"/>
    <property type="match status" value="1"/>
</dbReference>
<dbReference type="InterPro" id="IPR002661">
    <property type="entry name" value="Ribosome_recyc_fac"/>
</dbReference>
<dbReference type="InterPro" id="IPR023584">
    <property type="entry name" value="Ribosome_recyc_fac_dom"/>
</dbReference>
<dbReference type="InterPro" id="IPR036191">
    <property type="entry name" value="RRF_sf"/>
</dbReference>
<dbReference type="NCBIfam" id="TIGR00496">
    <property type="entry name" value="frr"/>
    <property type="match status" value="1"/>
</dbReference>
<dbReference type="PANTHER" id="PTHR20982:SF3">
    <property type="entry name" value="MITOCHONDRIAL RIBOSOME RECYCLING FACTOR PSEUDO 1"/>
    <property type="match status" value="1"/>
</dbReference>
<dbReference type="PANTHER" id="PTHR20982">
    <property type="entry name" value="RIBOSOME RECYCLING FACTOR"/>
    <property type="match status" value="1"/>
</dbReference>
<dbReference type="Pfam" id="PF01765">
    <property type="entry name" value="RRF"/>
    <property type="match status" value="1"/>
</dbReference>
<dbReference type="SUPFAM" id="SSF55194">
    <property type="entry name" value="Ribosome recycling factor, RRF"/>
    <property type="match status" value="1"/>
</dbReference>
<keyword id="KW-0963">Cytoplasm</keyword>
<keyword id="KW-0648">Protein biosynthesis</keyword>
<evidence type="ECO:0000255" key="1">
    <source>
        <dbReference type="HAMAP-Rule" id="MF_00040"/>
    </source>
</evidence>
<evidence type="ECO:0000256" key="2">
    <source>
        <dbReference type="SAM" id="MobiDB-lite"/>
    </source>
</evidence>
<accession>B2G6U4</accession>
<gene>
    <name evidence="1" type="primary">frr</name>
    <name type="ordered locus">LAR_0660</name>
</gene>
<feature type="chain" id="PRO_1000090754" description="Ribosome-recycling factor">
    <location>
        <begin position="1"/>
        <end position="187"/>
    </location>
</feature>
<feature type="region of interest" description="Disordered" evidence="2">
    <location>
        <begin position="141"/>
        <end position="169"/>
    </location>
</feature>
<comment type="function">
    <text evidence="1">Responsible for the release of ribosomes from messenger RNA at the termination of protein biosynthesis. May increase the efficiency of translation by recycling ribosomes from one round of translation to another.</text>
</comment>
<comment type="subcellular location">
    <subcellularLocation>
        <location evidence="1">Cytoplasm</location>
    </subcellularLocation>
</comment>
<comment type="similarity">
    <text evidence="1">Belongs to the RRF family.</text>
</comment>
<protein>
    <recommendedName>
        <fullName evidence="1">Ribosome-recycling factor</fullName>
        <shortName evidence="1">RRF</shortName>
    </recommendedName>
    <alternativeName>
        <fullName evidence="1">Ribosome-releasing factor</fullName>
    </alternativeName>
</protein>
<reference key="1">
    <citation type="journal article" date="2008" name="DNA Res.">
        <title>Comparative genome analysis of Lactobacillus reuteri and Lactobacillus fermentum reveal a genomic island for reuterin and cobalamin production.</title>
        <authorList>
            <person name="Morita H."/>
            <person name="Toh H."/>
            <person name="Fukuda S."/>
            <person name="Horikawa H."/>
            <person name="Oshima K."/>
            <person name="Suzuki T."/>
            <person name="Murakami M."/>
            <person name="Hisamatsu S."/>
            <person name="Kato Y."/>
            <person name="Takizawa T."/>
            <person name="Fukuoka H."/>
            <person name="Yoshimura T."/>
            <person name="Itoh K."/>
            <person name="O'Sullivan D.J."/>
            <person name="McKay L.L."/>
            <person name="Ohno H."/>
            <person name="Kikuchi J."/>
            <person name="Masaoka T."/>
            <person name="Hattori M."/>
        </authorList>
    </citation>
    <scope>NUCLEOTIDE SEQUENCE [LARGE SCALE GENOMIC DNA]</scope>
    <source>
        <strain>JCM 1112</strain>
    </source>
</reference>
<name>RRF_LIMRJ</name>
<organism>
    <name type="scientific">Limosilactobacillus reuteri subsp. reuteri (strain JCM 1112)</name>
    <name type="common">Lactobacillus reuteri</name>
    <dbReference type="NCBI Taxonomy" id="557433"/>
    <lineage>
        <taxon>Bacteria</taxon>
        <taxon>Bacillati</taxon>
        <taxon>Bacillota</taxon>
        <taxon>Bacilli</taxon>
        <taxon>Lactobacillales</taxon>
        <taxon>Lactobacillaceae</taxon>
        <taxon>Limosilactobacillus</taxon>
    </lineage>
</organism>
<proteinExistence type="inferred from homology"/>
<sequence>MATGKEILNDAKQKMAKSGYALQRTLADIRAGQANASLLNSVKVEYYGAPTPLNQVASITIPEARQLLITPYDESVLEEIEKAIYASNLGLTPQNDGSSIRLIIPQLTEDRRKELVKDVKAELEKAKVAVRNVRREAMDDLKKGNKNGDFNDDEFHDLEKKVQNETDAGIKNLEDIANAKEKELMEG</sequence>